<accession>Q944I4</accession>
<accession>A8MQE0</accession>
<accession>Q8LFL2</accession>
<accession>Q9C5L9</accession>
<accession>Q9C967</accession>
<keyword id="KW-0025">Alternative splicing</keyword>
<keyword id="KW-0067">ATP-binding</keyword>
<keyword id="KW-0150">Chloroplast</keyword>
<keyword id="KW-0963">Cytoplasm</keyword>
<keyword id="KW-0323">Glycolate pathway</keyword>
<keyword id="KW-0418">Kinase</keyword>
<keyword id="KW-0547">Nucleotide-binding</keyword>
<keyword id="KW-0601">Photorespiration</keyword>
<keyword id="KW-0934">Plastid</keyword>
<keyword id="KW-1185">Reference proteome</keyword>
<keyword id="KW-0808">Transferase</keyword>
<keyword id="KW-0809">Transit peptide</keyword>
<comment type="function">
    <text evidence="2">Catalyzes the concluding reaction of the photorespiratory C2 cycle, an indispensable ancillary metabolic pathway to the photosynthetic C3 cycle that enables land plants to grow in an oxygen-containing atmosphere.</text>
</comment>
<comment type="function">
    <molecule>Isoform 3</molecule>
    <text evidence="3">Cytoplasmic D-glycerate 3-kinase that constitutes a photorespiratory bypass that alleviates fluctuating light-induced photoinhibition (PubMed:29129375).</text>
</comment>
<comment type="catalytic activity">
    <reaction evidence="2">
        <text>(R)-glycerate + ATP = (2R)-3-phosphoglycerate + ADP + H(+)</text>
        <dbReference type="Rhea" id="RHEA:23516"/>
        <dbReference type="ChEBI" id="CHEBI:15378"/>
        <dbReference type="ChEBI" id="CHEBI:16659"/>
        <dbReference type="ChEBI" id="CHEBI:30616"/>
        <dbReference type="ChEBI" id="CHEBI:58272"/>
        <dbReference type="ChEBI" id="CHEBI:456216"/>
        <dbReference type="EC" id="2.7.1.31"/>
    </reaction>
</comment>
<comment type="pathway">
    <text evidence="5">Photosynthesis; photorespiration; 3-phospho-D-glycerate from glycine: step 4/4.</text>
</comment>
<comment type="subcellular location">
    <molecule>Isoform 1</molecule>
    <subcellularLocation>
        <location evidence="3">Plastid</location>
        <location evidence="3">Chloroplast</location>
    </subcellularLocation>
    <text evidence="3">Expressed in the light.</text>
</comment>
<comment type="subcellular location">
    <molecule>Isoform 3</molecule>
    <subcellularLocation>
        <location evidence="3">Cytoplasm</location>
    </subcellularLocation>
    <text evidence="3">Expressed in the dark.</text>
</comment>
<comment type="alternative products">
    <event type="alternative splicing"/>
    <isoform>
        <id>Q944I4-1</id>
        <name>1</name>
        <sequence type="displayed"/>
    </isoform>
    <isoform>
        <id>Q944I4-2</id>
        <name>2</name>
        <sequence type="described" ref="VSP_015208"/>
    </isoform>
    <isoform>
        <id>Q944I4-3</id>
        <name>3</name>
        <sequence type="described" ref="VSP_059299"/>
    </isoform>
</comment>
<comment type="induction">
    <text evidence="3">Isoform 1: Expressed in the light (PubMed:29129375). Isoform 3: Expressed in the dark (PubMed:29129375).</text>
</comment>
<comment type="miscellaneous">
    <molecule>Isoform 1</molecule>
    <text evidence="3">Expressed in the light.</text>
</comment>
<comment type="miscellaneous">
    <molecule>Isoform 3</molecule>
    <text evidence="3">Expressed in the dark.</text>
</comment>
<comment type="similarity">
    <text evidence="5">Belongs to the GLYK kinase family.</text>
</comment>
<comment type="sequence caution" evidence="5">
    <conflict type="erroneous gene model prediction">
        <sequence resource="EMBL-CDS" id="AAG52441"/>
    </conflict>
</comment>
<gene>
    <name evidence="4" type="primary">GLYK</name>
    <name evidence="6" type="ordered locus">At1g80380</name>
    <name evidence="7" type="ORF">F5I6.13</name>
</gene>
<name>GLYK_ARATH</name>
<feature type="transit peptide" description="Chloroplast" evidence="1">
    <location>
        <begin position="1"/>
        <end position="63"/>
    </location>
</feature>
<feature type="chain" id="PRO_0000012282" description="D-glycerate 3-kinase, chloroplastic">
    <location>
        <begin position="64"/>
        <end position="456"/>
    </location>
</feature>
<feature type="binding site" evidence="1">
    <location>
        <begin position="215"/>
        <end position="222"/>
    </location>
    <ligand>
        <name>ATP</name>
        <dbReference type="ChEBI" id="CHEBI:30616"/>
    </ligand>
</feature>
<feature type="splice variant" id="VSP_059299" description="In isoform 3.">
    <location>
        <begin position="1"/>
        <end position="92"/>
    </location>
</feature>
<feature type="splice variant" id="VSP_015208" description="In isoform 2." evidence="5">
    <location>
        <begin position="206"/>
        <end position="299"/>
    </location>
</feature>
<feature type="sequence conflict" description="In Ref. 4; AAM61346." evidence="5" ref="4">
    <original>W</original>
    <variation>C</variation>
    <location>
        <position position="188"/>
    </location>
</feature>
<feature type="sequence conflict" description="In Ref. 3; AAL16169." evidence="5" ref="3">
    <original>S</original>
    <variation>P</variation>
    <location>
        <position position="239"/>
    </location>
</feature>
<dbReference type="EC" id="2.7.1.31" evidence="2"/>
<dbReference type="EMBL" id="AC018848">
    <property type="protein sequence ID" value="AAG52441.1"/>
    <property type="status" value="ALT_SEQ"/>
    <property type="molecule type" value="Genomic_DNA"/>
</dbReference>
<dbReference type="EMBL" id="CP002684">
    <property type="protein sequence ID" value="AEE36393.1"/>
    <property type="molecule type" value="Genomic_DNA"/>
</dbReference>
<dbReference type="EMBL" id="CP002684">
    <property type="protein sequence ID" value="AEE36394.1"/>
    <property type="molecule type" value="Genomic_DNA"/>
</dbReference>
<dbReference type="EMBL" id="CP002684">
    <property type="protein sequence ID" value="AEE36395.1"/>
    <property type="molecule type" value="Genomic_DNA"/>
</dbReference>
<dbReference type="EMBL" id="AF360156">
    <property type="protein sequence ID" value="AAK25866.1"/>
    <property type="molecule type" value="mRNA"/>
</dbReference>
<dbReference type="EMBL" id="AF428401">
    <property type="protein sequence ID" value="AAL16169.1"/>
    <property type="molecule type" value="mRNA"/>
</dbReference>
<dbReference type="EMBL" id="AY056310">
    <property type="protein sequence ID" value="AAL07159.1"/>
    <property type="molecule type" value="mRNA"/>
</dbReference>
<dbReference type="EMBL" id="AY084779">
    <property type="protein sequence ID" value="AAM61346.1"/>
    <property type="molecule type" value="mRNA"/>
</dbReference>
<dbReference type="PIR" id="E96835">
    <property type="entry name" value="E96835"/>
</dbReference>
<dbReference type="RefSeq" id="NP_001077855.1">
    <molecule id="Q944I4-3"/>
    <property type="nucleotide sequence ID" value="NM_001084386.2"/>
</dbReference>
<dbReference type="RefSeq" id="NP_565237.1">
    <molecule id="Q944I4-2"/>
    <property type="nucleotide sequence ID" value="NM_106687.2"/>
</dbReference>
<dbReference type="RefSeq" id="NP_849912.1">
    <molecule id="Q944I4-1"/>
    <property type="nucleotide sequence ID" value="NM_179581.3"/>
</dbReference>
<dbReference type="SMR" id="Q944I4"/>
<dbReference type="FunCoup" id="Q944I4">
    <property type="interactions" value="1303"/>
</dbReference>
<dbReference type="STRING" id="3702.Q944I4"/>
<dbReference type="iPTMnet" id="Q944I4"/>
<dbReference type="PaxDb" id="3702-AT1G80380.2"/>
<dbReference type="EnsemblPlants" id="AT1G80380.1">
    <molecule id="Q944I4-2"/>
    <property type="protein sequence ID" value="AT1G80380.1"/>
    <property type="gene ID" value="AT1G80380"/>
</dbReference>
<dbReference type="EnsemblPlants" id="AT1G80380.2">
    <molecule id="Q944I4-1"/>
    <property type="protein sequence ID" value="AT1G80380.2"/>
    <property type="gene ID" value="AT1G80380"/>
</dbReference>
<dbReference type="EnsemblPlants" id="AT1G80380.3">
    <molecule id="Q944I4-3"/>
    <property type="protein sequence ID" value="AT1G80380.3"/>
    <property type="gene ID" value="AT1G80380"/>
</dbReference>
<dbReference type="GeneID" id="844378"/>
<dbReference type="Gramene" id="AT1G80380.1">
    <molecule id="Q944I4-2"/>
    <property type="protein sequence ID" value="AT1G80380.1"/>
    <property type="gene ID" value="AT1G80380"/>
</dbReference>
<dbReference type="Gramene" id="AT1G80380.2">
    <molecule id="Q944I4-1"/>
    <property type="protein sequence ID" value="AT1G80380.2"/>
    <property type="gene ID" value="AT1G80380"/>
</dbReference>
<dbReference type="Gramene" id="AT1G80380.3">
    <molecule id="Q944I4-3"/>
    <property type="protein sequence ID" value="AT1G80380.3"/>
    <property type="gene ID" value="AT1G80380"/>
</dbReference>
<dbReference type="KEGG" id="ath:AT1G80380"/>
<dbReference type="Araport" id="AT1G80380"/>
<dbReference type="TAIR" id="AT1G80380">
    <property type="gene designation" value="GLYK"/>
</dbReference>
<dbReference type="eggNOG" id="KOG2878">
    <property type="taxonomic scope" value="Eukaryota"/>
</dbReference>
<dbReference type="InParanoid" id="Q944I4"/>
<dbReference type="PhylomeDB" id="Q944I4"/>
<dbReference type="BioCyc" id="ARA:AT1G80380-MONOMER"/>
<dbReference type="BioCyc" id="MetaCyc:AT1G80380-MONOMER"/>
<dbReference type="BRENDA" id="2.7.1.31">
    <property type="organism ID" value="399"/>
</dbReference>
<dbReference type="UniPathway" id="UPA00951">
    <property type="reaction ID" value="UER00917"/>
</dbReference>
<dbReference type="CD-CODE" id="4299E36E">
    <property type="entry name" value="Nucleolus"/>
</dbReference>
<dbReference type="PRO" id="PR:Q944I4"/>
<dbReference type="Proteomes" id="UP000006548">
    <property type="component" value="Chromosome 1"/>
</dbReference>
<dbReference type="ExpressionAtlas" id="Q944I4">
    <property type="expression patterns" value="baseline and differential"/>
</dbReference>
<dbReference type="GO" id="GO:0009507">
    <property type="term" value="C:chloroplast"/>
    <property type="evidence" value="ECO:0007005"/>
    <property type="project" value="TAIR"/>
</dbReference>
<dbReference type="GO" id="GO:0009941">
    <property type="term" value="C:chloroplast envelope"/>
    <property type="evidence" value="ECO:0007005"/>
    <property type="project" value="TAIR"/>
</dbReference>
<dbReference type="GO" id="GO:0009570">
    <property type="term" value="C:chloroplast stroma"/>
    <property type="evidence" value="ECO:0007005"/>
    <property type="project" value="TAIR"/>
</dbReference>
<dbReference type="GO" id="GO:0005737">
    <property type="term" value="C:cytoplasm"/>
    <property type="evidence" value="ECO:0000314"/>
    <property type="project" value="UniProtKB"/>
</dbReference>
<dbReference type="GO" id="GO:0005739">
    <property type="term" value="C:mitochondrion"/>
    <property type="evidence" value="ECO:0007005"/>
    <property type="project" value="TAIR"/>
</dbReference>
<dbReference type="GO" id="GO:0005524">
    <property type="term" value="F:ATP binding"/>
    <property type="evidence" value="ECO:0007669"/>
    <property type="project" value="UniProtKB-KW"/>
</dbReference>
<dbReference type="GO" id="GO:0008887">
    <property type="term" value="F:glycerate kinase activity"/>
    <property type="evidence" value="ECO:0000314"/>
    <property type="project" value="TAIR"/>
</dbReference>
<dbReference type="GO" id="GO:0009854">
    <property type="term" value="P:oxidative photosynthetic carbon pathway"/>
    <property type="evidence" value="ECO:0007669"/>
    <property type="project" value="UniProtKB-KW"/>
</dbReference>
<dbReference type="GO" id="GO:0009853">
    <property type="term" value="P:photorespiration"/>
    <property type="evidence" value="ECO:0000315"/>
    <property type="project" value="TAIR"/>
</dbReference>
<dbReference type="FunFam" id="3.40.50.300:FF:001210">
    <property type="entry name" value="D-glycerate 3-kinase, chloroplastic"/>
    <property type="match status" value="1"/>
</dbReference>
<dbReference type="Gene3D" id="3.40.50.300">
    <property type="entry name" value="P-loop containing nucleotide triphosphate hydrolases"/>
    <property type="match status" value="1"/>
</dbReference>
<dbReference type="InterPro" id="IPR027417">
    <property type="entry name" value="P-loop_NTPase"/>
</dbReference>
<dbReference type="InterPro" id="IPR006083">
    <property type="entry name" value="PRK/URK"/>
</dbReference>
<dbReference type="PANTHER" id="PTHR10285">
    <property type="entry name" value="URIDINE KINASE"/>
    <property type="match status" value="1"/>
</dbReference>
<dbReference type="Pfam" id="PF00485">
    <property type="entry name" value="PRK"/>
    <property type="match status" value="1"/>
</dbReference>
<dbReference type="SUPFAM" id="SSF52540">
    <property type="entry name" value="P-loop containing nucleoside triphosphate hydrolases"/>
    <property type="match status" value="1"/>
</dbReference>
<reference key="1">
    <citation type="journal article" date="2000" name="Nature">
        <title>Sequence and analysis of chromosome 1 of the plant Arabidopsis thaliana.</title>
        <authorList>
            <person name="Theologis A."/>
            <person name="Ecker J.R."/>
            <person name="Palm C.J."/>
            <person name="Federspiel N.A."/>
            <person name="Kaul S."/>
            <person name="White O."/>
            <person name="Alonso J."/>
            <person name="Altafi H."/>
            <person name="Araujo R."/>
            <person name="Bowman C.L."/>
            <person name="Brooks S.Y."/>
            <person name="Buehler E."/>
            <person name="Chan A."/>
            <person name="Chao Q."/>
            <person name="Chen H."/>
            <person name="Cheuk R.F."/>
            <person name="Chin C.W."/>
            <person name="Chung M.K."/>
            <person name="Conn L."/>
            <person name="Conway A.B."/>
            <person name="Conway A.R."/>
            <person name="Creasy T.H."/>
            <person name="Dewar K."/>
            <person name="Dunn P."/>
            <person name="Etgu P."/>
            <person name="Feldblyum T.V."/>
            <person name="Feng J.-D."/>
            <person name="Fong B."/>
            <person name="Fujii C.Y."/>
            <person name="Gill J.E."/>
            <person name="Goldsmith A.D."/>
            <person name="Haas B."/>
            <person name="Hansen N.F."/>
            <person name="Hughes B."/>
            <person name="Huizar L."/>
            <person name="Hunter J.L."/>
            <person name="Jenkins J."/>
            <person name="Johnson-Hopson C."/>
            <person name="Khan S."/>
            <person name="Khaykin E."/>
            <person name="Kim C.J."/>
            <person name="Koo H.L."/>
            <person name="Kremenetskaia I."/>
            <person name="Kurtz D.B."/>
            <person name="Kwan A."/>
            <person name="Lam B."/>
            <person name="Langin-Hooper S."/>
            <person name="Lee A."/>
            <person name="Lee J.M."/>
            <person name="Lenz C.A."/>
            <person name="Li J.H."/>
            <person name="Li Y.-P."/>
            <person name="Lin X."/>
            <person name="Liu S.X."/>
            <person name="Liu Z.A."/>
            <person name="Luros J.S."/>
            <person name="Maiti R."/>
            <person name="Marziali A."/>
            <person name="Militscher J."/>
            <person name="Miranda M."/>
            <person name="Nguyen M."/>
            <person name="Nierman W.C."/>
            <person name="Osborne B.I."/>
            <person name="Pai G."/>
            <person name="Peterson J."/>
            <person name="Pham P.K."/>
            <person name="Rizzo M."/>
            <person name="Rooney T."/>
            <person name="Rowley D."/>
            <person name="Sakano H."/>
            <person name="Salzberg S.L."/>
            <person name="Schwartz J.R."/>
            <person name="Shinn P."/>
            <person name="Southwick A.M."/>
            <person name="Sun H."/>
            <person name="Tallon L.J."/>
            <person name="Tambunga G."/>
            <person name="Toriumi M.J."/>
            <person name="Town C.D."/>
            <person name="Utterback T."/>
            <person name="Van Aken S."/>
            <person name="Vaysberg M."/>
            <person name="Vysotskaia V.S."/>
            <person name="Walker M."/>
            <person name="Wu D."/>
            <person name="Yu G."/>
            <person name="Fraser C.M."/>
            <person name="Venter J.C."/>
            <person name="Davis R.W."/>
        </authorList>
    </citation>
    <scope>NUCLEOTIDE SEQUENCE [LARGE SCALE GENOMIC DNA]</scope>
    <source>
        <strain>cv. Columbia</strain>
    </source>
</reference>
<reference key="2">
    <citation type="journal article" date="2017" name="Plant J.">
        <title>Araport11: a complete reannotation of the Arabidopsis thaliana reference genome.</title>
        <authorList>
            <person name="Cheng C.Y."/>
            <person name="Krishnakumar V."/>
            <person name="Chan A.P."/>
            <person name="Thibaud-Nissen F."/>
            <person name="Schobel S."/>
            <person name="Town C.D."/>
        </authorList>
    </citation>
    <scope>GENOME REANNOTATION</scope>
    <source>
        <strain>cv. Columbia</strain>
    </source>
</reference>
<reference key="3">
    <citation type="journal article" date="2003" name="Science">
        <title>Empirical analysis of transcriptional activity in the Arabidopsis genome.</title>
        <authorList>
            <person name="Yamada K."/>
            <person name="Lim J."/>
            <person name="Dale J.M."/>
            <person name="Chen H."/>
            <person name="Shinn P."/>
            <person name="Palm C.J."/>
            <person name="Southwick A.M."/>
            <person name="Wu H.C."/>
            <person name="Kim C.J."/>
            <person name="Nguyen M."/>
            <person name="Pham P.K."/>
            <person name="Cheuk R.F."/>
            <person name="Karlin-Newmann G."/>
            <person name="Liu S.X."/>
            <person name="Lam B."/>
            <person name="Sakano H."/>
            <person name="Wu T."/>
            <person name="Yu G."/>
            <person name="Miranda M."/>
            <person name="Quach H.L."/>
            <person name="Tripp M."/>
            <person name="Chang C.H."/>
            <person name="Lee J.M."/>
            <person name="Toriumi M.J."/>
            <person name="Chan M.M."/>
            <person name="Tang C.C."/>
            <person name="Onodera C.S."/>
            <person name="Deng J.M."/>
            <person name="Akiyama K."/>
            <person name="Ansari Y."/>
            <person name="Arakawa T."/>
            <person name="Banh J."/>
            <person name="Banno F."/>
            <person name="Bowser L."/>
            <person name="Brooks S.Y."/>
            <person name="Carninci P."/>
            <person name="Chao Q."/>
            <person name="Choy N."/>
            <person name="Enju A."/>
            <person name="Goldsmith A.D."/>
            <person name="Gurjal M."/>
            <person name="Hansen N.F."/>
            <person name="Hayashizaki Y."/>
            <person name="Johnson-Hopson C."/>
            <person name="Hsuan V.W."/>
            <person name="Iida K."/>
            <person name="Karnes M."/>
            <person name="Khan S."/>
            <person name="Koesema E."/>
            <person name="Ishida J."/>
            <person name="Jiang P.X."/>
            <person name="Jones T."/>
            <person name="Kawai J."/>
            <person name="Kamiya A."/>
            <person name="Meyers C."/>
            <person name="Nakajima M."/>
            <person name="Narusaka M."/>
            <person name="Seki M."/>
            <person name="Sakurai T."/>
            <person name="Satou M."/>
            <person name="Tamse R."/>
            <person name="Vaysberg M."/>
            <person name="Wallender E.K."/>
            <person name="Wong C."/>
            <person name="Yamamura Y."/>
            <person name="Yuan S."/>
            <person name="Shinozaki K."/>
            <person name="Davis R.W."/>
            <person name="Theologis A."/>
            <person name="Ecker J.R."/>
        </authorList>
    </citation>
    <scope>NUCLEOTIDE SEQUENCE [LARGE SCALE MRNA] (ISOFORM 1)</scope>
    <source>
        <strain>cv. Columbia</strain>
    </source>
</reference>
<reference key="4">
    <citation type="submission" date="2002-03" db="EMBL/GenBank/DDBJ databases">
        <title>Full-length cDNA from Arabidopsis thaliana.</title>
        <authorList>
            <person name="Brover V.V."/>
            <person name="Troukhan M.E."/>
            <person name="Alexandrov N.A."/>
            <person name="Lu Y.-P."/>
            <person name="Flavell R.B."/>
            <person name="Feldmann K.A."/>
        </authorList>
    </citation>
    <scope>NUCLEOTIDE SEQUENCE [LARGE SCALE MRNA] (ISOFORM 2)</scope>
</reference>
<reference key="5">
    <citation type="journal article" date="2005" name="Plant Cell">
        <title>D-glycerate 3-kinase, the last unknown enzyme in the photorespiratory cycle in Arabidopsis, belongs to a novel kinase family.</title>
        <authorList>
            <person name="Boldt R."/>
            <person name="Edner C."/>
            <person name="Kolukisaoglu U."/>
            <person name="Hagemann M."/>
            <person name="Weckwerth W."/>
            <person name="Wienkoop S."/>
            <person name="Morgenthal K."/>
            <person name="Bauwe H."/>
        </authorList>
    </citation>
    <scope>CATALYTIC ACTIVITY</scope>
    <scope>IDENTIFICATION BY MASS SPECTROMETRY</scope>
    <scope>FUNCTION</scope>
</reference>
<reference key="6">
    <citation type="journal article" date="2017" name="Cell">
        <title>Light controls protein localization through phytochrome-mediated alternative promoter selection.</title>
        <authorList>
            <person name="Ushijima T."/>
            <person name="Hanada K."/>
            <person name="Gotoh E."/>
            <person name="Yamori W."/>
            <person name="Kodama Y."/>
            <person name="Tanaka H."/>
            <person name="Kusano M."/>
            <person name="Fukushima A."/>
            <person name="Tokizawa M."/>
            <person name="Yamamoto Y.Y."/>
            <person name="Tada Y."/>
            <person name="Suzuki Y."/>
            <person name="Matsushita T."/>
        </authorList>
    </citation>
    <scope>FUNCTION (ISOFORM 3)</scope>
    <scope>SUBCELLULAR LOCATION (ISOFORMS 1 AND 3)</scope>
    <scope>ALTERNATIVE SPLICING</scope>
    <scope>INDUCTION</scope>
</reference>
<sequence>MAVAISGSSLISSTLQHYNNRIYIRDYPIPCHSSNPICNSFNFKRRSFSPSSPKFNDHVVNPSSSYLSSKLSPIRTHSSFAACGCSWIQDNSMVHDYATTTNGTSKRCSALPTTNTVDVSSVSDLFEFICSGPLVNKIGITPQRVGQSIDKWLLYGSQLCRLFQLNELKLTIPQKARLYHYYIPVFIWCEDQIALHNSKFKDGDDVPPLVIGFSAPQGCGKTTLVFALDYLFKTTKKKSATISVDDFYLTAEGQAELRKKNPGNALLEYRGNAGSHDLKLSVETLEALSKLTKEGLKMKVPRYNKSAYSGRGDRADSSTWPEVEGPLSVILFEGWMLGFKPLPADVVKAVDPQLEVVNKNLEAYYDAWDKYIDAWVVIKIQDPSYVYRWRLQAEIAMRQDGQAGMSDEEVNDFVSRYLPAYKAYLPTLYAEGPSGSDPDRVLAIDIDEERNPILAN</sequence>
<evidence type="ECO:0000255" key="1"/>
<evidence type="ECO:0000269" key="2">
    <source>
    </source>
</evidence>
<evidence type="ECO:0000269" key="3">
    <source>
    </source>
</evidence>
<evidence type="ECO:0000303" key="4">
    <source>
    </source>
</evidence>
<evidence type="ECO:0000305" key="5"/>
<evidence type="ECO:0000312" key="6">
    <source>
        <dbReference type="Araport" id="AT1G80380"/>
    </source>
</evidence>
<evidence type="ECO:0000312" key="7">
    <source>
        <dbReference type="EMBL" id="AAG52441.1"/>
    </source>
</evidence>
<protein>
    <recommendedName>
        <fullName evidence="5">D-glycerate 3-kinase, chloroplastic</fullName>
        <shortName evidence="4">AtGLYK</shortName>
        <ecNumber evidence="2">2.7.1.31</ecNumber>
    </recommendedName>
</protein>
<proteinExistence type="evidence at protein level"/>
<organism>
    <name type="scientific">Arabidopsis thaliana</name>
    <name type="common">Mouse-ear cress</name>
    <dbReference type="NCBI Taxonomy" id="3702"/>
    <lineage>
        <taxon>Eukaryota</taxon>
        <taxon>Viridiplantae</taxon>
        <taxon>Streptophyta</taxon>
        <taxon>Embryophyta</taxon>
        <taxon>Tracheophyta</taxon>
        <taxon>Spermatophyta</taxon>
        <taxon>Magnoliopsida</taxon>
        <taxon>eudicotyledons</taxon>
        <taxon>Gunneridae</taxon>
        <taxon>Pentapetalae</taxon>
        <taxon>rosids</taxon>
        <taxon>malvids</taxon>
        <taxon>Brassicales</taxon>
        <taxon>Brassicaceae</taxon>
        <taxon>Camelineae</taxon>
        <taxon>Arabidopsis</taxon>
    </lineage>
</organism>